<proteinExistence type="inferred from homology"/>
<protein>
    <recommendedName>
        <fullName evidence="1">Spermidine/putrescine import ATP-binding protein PotA</fullName>
        <ecNumber evidence="1">7.6.2.11</ecNumber>
    </recommendedName>
</protein>
<dbReference type="EC" id="7.6.2.11" evidence="1"/>
<dbReference type="EMBL" id="CP000076">
    <property type="protein sequence ID" value="AAY94394.1"/>
    <property type="molecule type" value="Genomic_DNA"/>
</dbReference>
<dbReference type="RefSeq" id="WP_011063419.1">
    <property type="nucleotide sequence ID" value="NC_004129.6"/>
</dbReference>
<dbReference type="SMR" id="Q4K681"/>
<dbReference type="STRING" id="220664.PFL_5174"/>
<dbReference type="KEGG" id="pfl:PFL_5174"/>
<dbReference type="PATRIC" id="fig|220664.5.peg.5286"/>
<dbReference type="eggNOG" id="COG3842">
    <property type="taxonomic scope" value="Bacteria"/>
</dbReference>
<dbReference type="HOGENOM" id="CLU_000604_1_1_6"/>
<dbReference type="Proteomes" id="UP000008540">
    <property type="component" value="Chromosome"/>
</dbReference>
<dbReference type="GO" id="GO:0043190">
    <property type="term" value="C:ATP-binding cassette (ABC) transporter complex"/>
    <property type="evidence" value="ECO:0007669"/>
    <property type="project" value="InterPro"/>
</dbReference>
<dbReference type="GO" id="GO:0015417">
    <property type="term" value="F:ABC-type polyamine transporter activity"/>
    <property type="evidence" value="ECO:0007669"/>
    <property type="project" value="UniProtKB-EC"/>
</dbReference>
<dbReference type="GO" id="GO:0005524">
    <property type="term" value="F:ATP binding"/>
    <property type="evidence" value="ECO:0007669"/>
    <property type="project" value="UniProtKB-KW"/>
</dbReference>
<dbReference type="GO" id="GO:0016887">
    <property type="term" value="F:ATP hydrolysis activity"/>
    <property type="evidence" value="ECO:0007669"/>
    <property type="project" value="InterPro"/>
</dbReference>
<dbReference type="FunFam" id="3.40.50.300:FF:000133">
    <property type="entry name" value="Spermidine/putrescine import ATP-binding protein PotA"/>
    <property type="match status" value="1"/>
</dbReference>
<dbReference type="Gene3D" id="2.40.50.100">
    <property type="match status" value="1"/>
</dbReference>
<dbReference type="Gene3D" id="3.40.50.300">
    <property type="entry name" value="P-loop containing nucleotide triphosphate hydrolases"/>
    <property type="match status" value="1"/>
</dbReference>
<dbReference type="InterPro" id="IPR003593">
    <property type="entry name" value="AAA+_ATPase"/>
</dbReference>
<dbReference type="InterPro" id="IPR050093">
    <property type="entry name" value="ABC_SmlMolc_Importer"/>
</dbReference>
<dbReference type="InterPro" id="IPR003439">
    <property type="entry name" value="ABC_transporter-like_ATP-bd"/>
</dbReference>
<dbReference type="InterPro" id="IPR017871">
    <property type="entry name" value="ABC_transporter-like_CS"/>
</dbReference>
<dbReference type="InterPro" id="IPR008995">
    <property type="entry name" value="Mo/tungstate-bd_C_term_dom"/>
</dbReference>
<dbReference type="InterPro" id="IPR027417">
    <property type="entry name" value="P-loop_NTPase"/>
</dbReference>
<dbReference type="InterPro" id="IPR005893">
    <property type="entry name" value="PotA-like"/>
</dbReference>
<dbReference type="InterPro" id="IPR013611">
    <property type="entry name" value="Transp-assoc_OB_typ2"/>
</dbReference>
<dbReference type="NCBIfam" id="TIGR01187">
    <property type="entry name" value="potA"/>
    <property type="match status" value="1"/>
</dbReference>
<dbReference type="PANTHER" id="PTHR42781">
    <property type="entry name" value="SPERMIDINE/PUTRESCINE IMPORT ATP-BINDING PROTEIN POTA"/>
    <property type="match status" value="1"/>
</dbReference>
<dbReference type="PANTHER" id="PTHR42781:SF4">
    <property type="entry name" value="SPERMIDINE_PUTRESCINE IMPORT ATP-BINDING PROTEIN POTA"/>
    <property type="match status" value="1"/>
</dbReference>
<dbReference type="Pfam" id="PF00005">
    <property type="entry name" value="ABC_tran"/>
    <property type="match status" value="1"/>
</dbReference>
<dbReference type="Pfam" id="PF08402">
    <property type="entry name" value="TOBE_2"/>
    <property type="match status" value="1"/>
</dbReference>
<dbReference type="SMART" id="SM00382">
    <property type="entry name" value="AAA"/>
    <property type="match status" value="1"/>
</dbReference>
<dbReference type="SUPFAM" id="SSF50331">
    <property type="entry name" value="MOP-like"/>
    <property type="match status" value="1"/>
</dbReference>
<dbReference type="SUPFAM" id="SSF52540">
    <property type="entry name" value="P-loop containing nucleoside triphosphate hydrolases"/>
    <property type="match status" value="1"/>
</dbReference>
<dbReference type="PROSITE" id="PS00211">
    <property type="entry name" value="ABC_TRANSPORTER_1"/>
    <property type="match status" value="1"/>
</dbReference>
<dbReference type="PROSITE" id="PS50893">
    <property type="entry name" value="ABC_TRANSPORTER_2"/>
    <property type="match status" value="1"/>
</dbReference>
<dbReference type="PROSITE" id="PS51305">
    <property type="entry name" value="POTA"/>
    <property type="match status" value="1"/>
</dbReference>
<organism>
    <name type="scientific">Pseudomonas fluorescens (strain ATCC BAA-477 / NRRL B-23932 / Pf-5)</name>
    <dbReference type="NCBI Taxonomy" id="220664"/>
    <lineage>
        <taxon>Bacteria</taxon>
        <taxon>Pseudomonadati</taxon>
        <taxon>Pseudomonadota</taxon>
        <taxon>Gammaproteobacteria</taxon>
        <taxon>Pseudomonadales</taxon>
        <taxon>Pseudomonadaceae</taxon>
        <taxon>Pseudomonas</taxon>
    </lineage>
</organism>
<reference key="1">
    <citation type="journal article" date="2005" name="Nat. Biotechnol.">
        <title>Complete genome sequence of the plant commensal Pseudomonas fluorescens Pf-5.</title>
        <authorList>
            <person name="Paulsen I.T."/>
            <person name="Press C.M."/>
            <person name="Ravel J."/>
            <person name="Kobayashi D.Y."/>
            <person name="Myers G.S.A."/>
            <person name="Mavrodi D.V."/>
            <person name="DeBoy R.T."/>
            <person name="Seshadri R."/>
            <person name="Ren Q."/>
            <person name="Madupu R."/>
            <person name="Dodson R.J."/>
            <person name="Durkin A.S."/>
            <person name="Brinkac L.M."/>
            <person name="Daugherty S.C."/>
            <person name="Sullivan S.A."/>
            <person name="Rosovitz M.J."/>
            <person name="Gwinn M.L."/>
            <person name="Zhou L."/>
            <person name="Schneider D.J."/>
            <person name="Cartinhour S.W."/>
            <person name="Nelson W.C."/>
            <person name="Weidman J."/>
            <person name="Watkins K."/>
            <person name="Tran K."/>
            <person name="Khouri H."/>
            <person name="Pierson E.A."/>
            <person name="Pierson L.S. III"/>
            <person name="Thomashow L.S."/>
            <person name="Loper J.E."/>
        </authorList>
    </citation>
    <scope>NUCLEOTIDE SEQUENCE [LARGE SCALE GENOMIC DNA]</scope>
    <source>
        <strain>ATCC BAA-477 / NRRL B-23932 / Pf-5</strain>
    </source>
</reference>
<gene>
    <name evidence="1" type="primary">potA</name>
    <name type="ordered locus">PFL_5174</name>
</gene>
<accession>Q4K681</accession>
<sequence length="372" mass="40919">MNALHALQTLAVSIRSVRKVYGDPHSGPVALKNIDLDIRDNEFFTLLGPSGCGKTTLLRMIAGFEFPTQGEILLYGENIADRPPFERPVNTVFQHYALFPHMTLAENLAFGLESRPMGQVLSKAQIDERVREMLALVQMERFAARKPNQLSGGQQQRIALARALAPHPKVLLLDEPLSALDLKLRQAMREELKAIQAKTGITFIFVTHDQEEALTLSDRIAVLSEGEVQQVGRPEEIYEQPRNRFVADFIGETNFIPAMVSRVEAGLAWFSGPAGQALPAQPCTTAKVGQQVTLSVRPERLHLRGDASQGALACRIEALIYLGTDLQYQVSLGDGTRLTVRTPNSLEHHPRLSVGSSAGLLFERGSASVLLD</sequence>
<evidence type="ECO:0000255" key="1">
    <source>
        <dbReference type="HAMAP-Rule" id="MF_01726"/>
    </source>
</evidence>
<feature type="chain" id="PRO_0000286275" description="Spermidine/putrescine import ATP-binding protein PotA">
    <location>
        <begin position="1"/>
        <end position="372"/>
    </location>
</feature>
<feature type="domain" description="ABC transporter" evidence="1">
    <location>
        <begin position="12"/>
        <end position="250"/>
    </location>
</feature>
<feature type="binding site" evidence="1">
    <location>
        <begin position="48"/>
        <end position="55"/>
    </location>
    <ligand>
        <name>ATP</name>
        <dbReference type="ChEBI" id="CHEBI:30616"/>
    </ligand>
</feature>
<name>POTA_PSEF5</name>
<keyword id="KW-0067">ATP-binding</keyword>
<keyword id="KW-0997">Cell inner membrane</keyword>
<keyword id="KW-1003">Cell membrane</keyword>
<keyword id="KW-0472">Membrane</keyword>
<keyword id="KW-0547">Nucleotide-binding</keyword>
<keyword id="KW-1278">Translocase</keyword>
<keyword id="KW-0813">Transport</keyword>
<comment type="function">
    <text evidence="1">Part of the ABC transporter complex PotABCD involved in spermidine/putrescine import. Responsible for energy coupling to the transport system.</text>
</comment>
<comment type="catalytic activity">
    <reaction evidence="1">
        <text>ATP + H2O + polyamine-[polyamine-binding protein]Side 1 = ADP + phosphate + polyamineSide 2 + [polyamine-binding protein]Side 1.</text>
        <dbReference type="EC" id="7.6.2.11"/>
    </reaction>
</comment>
<comment type="subunit">
    <text evidence="1">The complex is composed of two ATP-binding proteins (PotA), two transmembrane proteins (PotB and PotC) and a solute-binding protein (PotD).</text>
</comment>
<comment type="subcellular location">
    <subcellularLocation>
        <location evidence="1">Cell inner membrane</location>
        <topology evidence="1">Peripheral membrane protein</topology>
    </subcellularLocation>
</comment>
<comment type="similarity">
    <text evidence="1">Belongs to the ABC transporter superfamily. Spermidine/putrescine importer (TC 3.A.1.11.1) family.</text>
</comment>